<keyword id="KW-0320">Glycogen biosynthesis</keyword>
<keyword id="KW-0328">Glycosyltransferase</keyword>
<keyword id="KW-0808">Transferase</keyword>
<organism>
    <name type="scientific">Prochlorococcus marinus (strain AS9601)</name>
    <dbReference type="NCBI Taxonomy" id="146891"/>
    <lineage>
        <taxon>Bacteria</taxon>
        <taxon>Bacillati</taxon>
        <taxon>Cyanobacteriota</taxon>
        <taxon>Cyanophyceae</taxon>
        <taxon>Synechococcales</taxon>
        <taxon>Prochlorococcaceae</taxon>
        <taxon>Prochlorococcus</taxon>
    </lineage>
</organism>
<gene>
    <name evidence="1" type="primary">glgA</name>
    <name type="ordered locus">A9601_06651</name>
</gene>
<accession>A2BQ90</accession>
<feature type="chain" id="PRO_1000014377" description="Glycogen synthase">
    <location>
        <begin position="1"/>
        <end position="483"/>
    </location>
</feature>
<feature type="binding site" evidence="1">
    <location>
        <position position="15"/>
    </location>
    <ligand>
        <name>ADP-alpha-D-glucose</name>
        <dbReference type="ChEBI" id="CHEBI:57498"/>
    </ligand>
</feature>
<protein>
    <recommendedName>
        <fullName evidence="1">Glycogen synthase</fullName>
        <ecNumber evidence="1">2.4.1.21</ecNumber>
    </recommendedName>
    <alternativeName>
        <fullName evidence="1">Starch [bacterial glycogen] synthase</fullName>
    </alternativeName>
</protein>
<name>GLGA_PROMS</name>
<proteinExistence type="inferred from homology"/>
<evidence type="ECO:0000255" key="1">
    <source>
        <dbReference type="HAMAP-Rule" id="MF_00484"/>
    </source>
</evidence>
<reference key="1">
    <citation type="journal article" date="2007" name="PLoS Genet.">
        <title>Patterns and implications of gene gain and loss in the evolution of Prochlorococcus.</title>
        <authorList>
            <person name="Kettler G.C."/>
            <person name="Martiny A.C."/>
            <person name="Huang K."/>
            <person name="Zucker J."/>
            <person name="Coleman M.L."/>
            <person name="Rodrigue S."/>
            <person name="Chen F."/>
            <person name="Lapidus A."/>
            <person name="Ferriera S."/>
            <person name="Johnson J."/>
            <person name="Steglich C."/>
            <person name="Church G.M."/>
            <person name="Richardson P."/>
            <person name="Chisholm S.W."/>
        </authorList>
    </citation>
    <scope>NUCLEOTIDE SEQUENCE [LARGE SCALE GENOMIC DNA]</scope>
    <source>
        <strain>AS9601</strain>
    </source>
</reference>
<dbReference type="EC" id="2.4.1.21" evidence="1"/>
<dbReference type="EMBL" id="CP000551">
    <property type="protein sequence ID" value="ABM69951.1"/>
    <property type="molecule type" value="Genomic_DNA"/>
</dbReference>
<dbReference type="RefSeq" id="WP_011818113.1">
    <property type="nucleotide sequence ID" value="NC_008816.1"/>
</dbReference>
<dbReference type="SMR" id="A2BQ90"/>
<dbReference type="STRING" id="146891.A9601_06651"/>
<dbReference type="CAZy" id="GT5">
    <property type="family name" value="Glycosyltransferase Family 5"/>
</dbReference>
<dbReference type="KEGG" id="pmb:A9601_06651"/>
<dbReference type="eggNOG" id="COG0297">
    <property type="taxonomic scope" value="Bacteria"/>
</dbReference>
<dbReference type="HOGENOM" id="CLU_009583_18_2_3"/>
<dbReference type="OrthoDB" id="9808590at2"/>
<dbReference type="UniPathway" id="UPA00164"/>
<dbReference type="Proteomes" id="UP000002590">
    <property type="component" value="Chromosome"/>
</dbReference>
<dbReference type="GO" id="GO:0009011">
    <property type="term" value="F:alpha-1,4-glucan glucosyltransferase (ADP-glucose donor) activity"/>
    <property type="evidence" value="ECO:0007669"/>
    <property type="project" value="UniProtKB-UniRule"/>
</dbReference>
<dbReference type="GO" id="GO:0004373">
    <property type="term" value="F:alpha-1,4-glucan glucosyltransferase (UDP-glucose donor) activity"/>
    <property type="evidence" value="ECO:0007669"/>
    <property type="project" value="InterPro"/>
</dbReference>
<dbReference type="GO" id="GO:0005978">
    <property type="term" value="P:glycogen biosynthetic process"/>
    <property type="evidence" value="ECO:0007669"/>
    <property type="project" value="UniProtKB-UniRule"/>
</dbReference>
<dbReference type="CDD" id="cd03791">
    <property type="entry name" value="GT5_Glycogen_synthase_DULL1-like"/>
    <property type="match status" value="1"/>
</dbReference>
<dbReference type="Gene3D" id="3.40.50.2000">
    <property type="entry name" value="Glycogen Phosphorylase B"/>
    <property type="match status" value="2"/>
</dbReference>
<dbReference type="HAMAP" id="MF_00484">
    <property type="entry name" value="Glycogen_synth"/>
    <property type="match status" value="1"/>
</dbReference>
<dbReference type="InterPro" id="IPR001296">
    <property type="entry name" value="Glyco_trans_1"/>
</dbReference>
<dbReference type="InterPro" id="IPR011835">
    <property type="entry name" value="GS/SS"/>
</dbReference>
<dbReference type="InterPro" id="IPR013534">
    <property type="entry name" value="Starch_synth_cat_dom"/>
</dbReference>
<dbReference type="NCBIfam" id="TIGR02095">
    <property type="entry name" value="glgA"/>
    <property type="match status" value="1"/>
</dbReference>
<dbReference type="NCBIfam" id="NF001900">
    <property type="entry name" value="PRK00654.1-3"/>
    <property type="match status" value="1"/>
</dbReference>
<dbReference type="PANTHER" id="PTHR45825:SF11">
    <property type="entry name" value="ALPHA AMYLASE DOMAIN-CONTAINING PROTEIN"/>
    <property type="match status" value="1"/>
</dbReference>
<dbReference type="PANTHER" id="PTHR45825">
    <property type="entry name" value="GRANULE-BOUND STARCH SYNTHASE 1, CHLOROPLASTIC/AMYLOPLASTIC"/>
    <property type="match status" value="1"/>
</dbReference>
<dbReference type="Pfam" id="PF08323">
    <property type="entry name" value="Glyco_transf_5"/>
    <property type="match status" value="1"/>
</dbReference>
<dbReference type="Pfam" id="PF00534">
    <property type="entry name" value="Glycos_transf_1"/>
    <property type="match status" value="1"/>
</dbReference>
<dbReference type="SUPFAM" id="SSF53756">
    <property type="entry name" value="UDP-Glycosyltransferase/glycogen phosphorylase"/>
    <property type="match status" value="1"/>
</dbReference>
<sequence length="483" mass="55135">MRILLAAAECAPMIKVGGMGDVVGSLPPSLIKLGHDVRVIIPGYGKLWSLLEVSNEPVFRANTMGTDFAVYKAKHPIHNYVIYLVGHPTFDSDQIYGGENEDWRFTFFASATAEFAWNYWKPQVLHCHDWHTGMIPVWMHQDPEISTVFTIHNLKYQGPWRWKLEKMTWCPWYMHGDHTMAAAMLYADRVNAVSPTYADEIKTHEYGESLEGLLNYISGKLRGILNGIDLDEWNPAKDPVLPAKFSIKNLENRLENKKILQREMGLEVNSKKYLLGMVSRLVDQKGVDLLLQVSRRLLAYTDSQIAVLGTGDRYLESGLWQLALDYPGRFSVFLTYDDSLSRLIYGGSDAFLMPSRFEPCGISQLLAMRYGSIPIVRRVGGLVDTVLPHDPENNIGTGFCFDRFEPIDFYTSLVRSWEAFRHKDSWELLQKRAMSQEFSWQRSALEYEVMYKDVCGIKEPSPDVAEVEKFSYGQSADPSLKKV</sequence>
<comment type="function">
    <text evidence="1">Synthesizes alpha-1,4-glucan chains using ADP-glucose.</text>
</comment>
<comment type="catalytic activity">
    <reaction evidence="1">
        <text>[(1-&gt;4)-alpha-D-glucosyl](n) + ADP-alpha-D-glucose = [(1-&gt;4)-alpha-D-glucosyl](n+1) + ADP + H(+)</text>
        <dbReference type="Rhea" id="RHEA:18189"/>
        <dbReference type="Rhea" id="RHEA-COMP:9584"/>
        <dbReference type="Rhea" id="RHEA-COMP:9587"/>
        <dbReference type="ChEBI" id="CHEBI:15378"/>
        <dbReference type="ChEBI" id="CHEBI:15444"/>
        <dbReference type="ChEBI" id="CHEBI:57498"/>
        <dbReference type="ChEBI" id="CHEBI:456216"/>
        <dbReference type="EC" id="2.4.1.21"/>
    </reaction>
</comment>
<comment type="pathway">
    <text evidence="1">Glycan biosynthesis; glycogen biosynthesis.</text>
</comment>
<comment type="similarity">
    <text evidence="1">Belongs to the glycosyltransferase 1 family. Bacterial/plant glycogen synthase subfamily.</text>
</comment>